<keyword id="KW-1003">Cell membrane</keyword>
<keyword id="KW-0472">Membrane</keyword>
<keyword id="KW-1185">Reference proteome</keyword>
<keyword id="KW-1278">Translocase</keyword>
<keyword id="KW-0812">Transmembrane</keyword>
<keyword id="KW-1133">Transmembrane helix</keyword>
<evidence type="ECO:0000250" key="1"/>
<evidence type="ECO:0000255" key="2"/>
<evidence type="ECO:0000305" key="3"/>
<proteinExistence type="inferred from homology"/>
<sequence length="132" mass="14643">MKIQGKMFIWLAVFILAMAIIYGVWSKEPAGTTALFLAFGLSIMIGYYLAFTARRVDAGAQDNKEADVADDAGEVGFFSPHSWQPLALGIGGALAFMGVVFGWWLLYFSAPIILIGLWGWVFEYYRGESRTQ</sequence>
<comment type="function">
    <text evidence="1">Part of cytochrome c oxidase, its function is unknown.</text>
</comment>
<comment type="catalytic activity">
    <reaction>
        <text>4 Fe(II)-[cytochrome c] + O2 + 8 H(+)(in) = 4 Fe(III)-[cytochrome c] + 2 H2O + 4 H(+)(out)</text>
        <dbReference type="Rhea" id="RHEA:11436"/>
        <dbReference type="Rhea" id="RHEA-COMP:10350"/>
        <dbReference type="Rhea" id="RHEA-COMP:14399"/>
        <dbReference type="ChEBI" id="CHEBI:15377"/>
        <dbReference type="ChEBI" id="CHEBI:15378"/>
        <dbReference type="ChEBI" id="CHEBI:15379"/>
        <dbReference type="ChEBI" id="CHEBI:29033"/>
        <dbReference type="ChEBI" id="CHEBI:29034"/>
        <dbReference type="EC" id="7.1.1.9"/>
    </reaction>
</comment>
<comment type="subunit">
    <text evidence="1">Associates with subunits I, II and III to form cytochrome c oxidase.</text>
</comment>
<comment type="subcellular location">
    <subcellularLocation>
        <location evidence="1">Cell membrane</location>
        <topology evidence="1">Multi-pass membrane protein</topology>
    </subcellularLocation>
</comment>
<comment type="similarity">
    <text evidence="3">Belongs to the cytochrome c oxidase bacterial subunit CtaF family.</text>
</comment>
<organism>
    <name type="scientific">Streptomyces avermitilis (strain ATCC 31267 / DSM 46492 / JCM 5070 / NBRC 14893 / NCIMB 12804 / NRRL 8165 / MA-4680)</name>
    <dbReference type="NCBI Taxonomy" id="227882"/>
    <lineage>
        <taxon>Bacteria</taxon>
        <taxon>Bacillati</taxon>
        <taxon>Actinomycetota</taxon>
        <taxon>Actinomycetes</taxon>
        <taxon>Kitasatosporales</taxon>
        <taxon>Streptomycetaceae</taxon>
        <taxon>Streptomyces</taxon>
    </lineage>
</organism>
<accession>Q82AK8</accession>
<reference key="1">
    <citation type="journal article" date="2001" name="Proc. Natl. Acad. Sci. U.S.A.">
        <title>Genome sequence of an industrial microorganism Streptomyces avermitilis: deducing the ability of producing secondary metabolites.</title>
        <authorList>
            <person name="Omura S."/>
            <person name="Ikeda H."/>
            <person name="Ishikawa J."/>
            <person name="Hanamoto A."/>
            <person name="Takahashi C."/>
            <person name="Shinose M."/>
            <person name="Takahashi Y."/>
            <person name="Horikawa H."/>
            <person name="Nakazawa H."/>
            <person name="Osonoe T."/>
            <person name="Kikuchi H."/>
            <person name="Shiba T."/>
            <person name="Sakaki Y."/>
            <person name="Hattori M."/>
        </authorList>
    </citation>
    <scope>NUCLEOTIDE SEQUENCE [LARGE SCALE GENOMIC DNA]</scope>
    <source>
        <strain>ATCC 31267 / DSM 46492 / JCM 5070 / NBRC 14893 / NCIMB 12804 / NRRL 8165 / MA-4680</strain>
    </source>
</reference>
<reference key="2">
    <citation type="journal article" date="2003" name="Nat. Biotechnol.">
        <title>Complete genome sequence and comparative analysis of the industrial microorganism Streptomyces avermitilis.</title>
        <authorList>
            <person name="Ikeda H."/>
            <person name="Ishikawa J."/>
            <person name="Hanamoto A."/>
            <person name="Shinose M."/>
            <person name="Kikuchi H."/>
            <person name="Shiba T."/>
            <person name="Sakaki Y."/>
            <person name="Hattori M."/>
            <person name="Omura S."/>
        </authorList>
    </citation>
    <scope>NUCLEOTIDE SEQUENCE [LARGE SCALE GENOMIC DNA]</scope>
    <source>
        <strain>ATCC 31267 / DSM 46492 / JCM 5070 / NBRC 14893 / NCIMB 12804 / NRRL 8165 / MA-4680</strain>
    </source>
</reference>
<protein>
    <recommendedName>
        <fullName>Probable cytochrome c oxidase polypeptide 4</fullName>
        <ecNumber>7.1.1.9</ecNumber>
    </recommendedName>
    <alternativeName>
        <fullName>Cytochrome aa3 subunit 4</fullName>
    </alternativeName>
    <alternativeName>
        <fullName>Cytochrome c oxidase polypeptide IV</fullName>
    </alternativeName>
</protein>
<gene>
    <name type="primary">ctaF</name>
    <name type="ordered locus">SAV_6049</name>
</gene>
<name>COX4_STRAW</name>
<feature type="chain" id="PRO_0000220021" description="Probable cytochrome c oxidase polypeptide 4">
    <location>
        <begin position="1"/>
        <end position="132"/>
    </location>
</feature>
<feature type="transmembrane region" description="Helical" evidence="2">
    <location>
        <begin position="5"/>
        <end position="25"/>
    </location>
</feature>
<feature type="transmembrane region" description="Helical" evidence="2">
    <location>
        <begin position="33"/>
        <end position="53"/>
    </location>
</feature>
<feature type="transmembrane region" description="Helical" evidence="2">
    <location>
        <begin position="86"/>
        <end position="106"/>
    </location>
</feature>
<feature type="transmembrane region" description="Helical" evidence="2">
    <location>
        <begin position="107"/>
        <end position="127"/>
    </location>
</feature>
<dbReference type="EC" id="7.1.1.9"/>
<dbReference type="EMBL" id="BA000030">
    <property type="protein sequence ID" value="BAC73760.1"/>
    <property type="molecule type" value="Genomic_DNA"/>
</dbReference>
<dbReference type="RefSeq" id="WP_010987450.1">
    <property type="nucleotide sequence ID" value="NZ_JZJK01000089.1"/>
</dbReference>
<dbReference type="SMR" id="Q82AK8"/>
<dbReference type="GeneID" id="41543126"/>
<dbReference type="KEGG" id="sma:SAVERM_6049"/>
<dbReference type="eggNOG" id="ENOG5031SSV">
    <property type="taxonomic scope" value="Bacteria"/>
</dbReference>
<dbReference type="HOGENOM" id="CLU_145919_0_0_11"/>
<dbReference type="OrthoDB" id="5244617at2"/>
<dbReference type="Proteomes" id="UP000000428">
    <property type="component" value="Chromosome"/>
</dbReference>
<dbReference type="GO" id="GO:0005886">
    <property type="term" value="C:plasma membrane"/>
    <property type="evidence" value="ECO:0007669"/>
    <property type="project" value="UniProtKB-SubCell"/>
</dbReference>
<dbReference type="GO" id="GO:0004129">
    <property type="term" value="F:cytochrome-c oxidase activity"/>
    <property type="evidence" value="ECO:0007669"/>
    <property type="project" value="UniProtKB-EC"/>
</dbReference>
<dbReference type="GO" id="GO:0022900">
    <property type="term" value="P:electron transport chain"/>
    <property type="evidence" value="ECO:0007669"/>
    <property type="project" value="InterPro"/>
</dbReference>
<dbReference type="InterPro" id="IPR021050">
    <property type="entry name" value="Cyt_c_oxidase_su4_actinobac"/>
</dbReference>
<dbReference type="Pfam" id="PF12270">
    <property type="entry name" value="Cyt_c_ox_IV"/>
    <property type="match status" value="1"/>
</dbReference>
<dbReference type="PIRSF" id="PIRSF017385">
    <property type="entry name" value="CtaF"/>
    <property type="match status" value="1"/>
</dbReference>